<dbReference type="EMBL" id="X16660">
    <property type="protein sequence ID" value="CAA34646.1"/>
    <property type="molecule type" value="Genomic_DNA"/>
</dbReference>
<dbReference type="PIR" id="S06705">
    <property type="entry name" value="S06705"/>
</dbReference>
<dbReference type="BioGRID" id="109508">
    <property type="interactions" value="2"/>
</dbReference>
<dbReference type="iPTMnet" id="P13985"/>
<dbReference type="PhosphoSitePlus" id="P13985"/>
<dbReference type="BioMuta" id="HGNC:5180"/>
<dbReference type="MassIVE" id="P13985"/>
<dbReference type="ProteomicsDB" id="53013"/>
<dbReference type="AGR" id="HGNC:5180"/>
<dbReference type="GeneCards" id="HRES1"/>
<dbReference type="HGNC" id="HGNC:5180">
    <property type="gene designation" value="HRES1"/>
</dbReference>
<dbReference type="MIM" id="143025">
    <property type="type" value="gene"/>
</dbReference>
<dbReference type="neXtProt" id="NX_P13985"/>
<dbReference type="InParanoid" id="P13985"/>
<dbReference type="PAN-GO" id="P13985">
    <property type="GO annotations" value="0 GO annotations based on evolutionary models"/>
</dbReference>
<dbReference type="Pharos" id="P13985">
    <property type="development level" value="Tdark"/>
</dbReference>
<dbReference type="Proteomes" id="UP000005640">
    <property type="component" value="Unplaced"/>
</dbReference>
<dbReference type="RNAct" id="P13985">
    <property type="molecule type" value="protein"/>
</dbReference>
<proteinExistence type="uncertain"/>
<reference key="1">
    <citation type="journal article" date="1989" name="Nucleic Acids Res.">
        <title>Detection and cloning of new HTLV-related endogenous sequences in man.</title>
        <authorList>
            <person name="Perl A."/>
            <person name="Rosenblatt J.D."/>
            <person name="Chen I.S."/>
            <person name="DiVincenzo J.P."/>
            <person name="Bever R."/>
            <person name="Poiesz B.J."/>
            <person name="Abraham G.N."/>
        </authorList>
    </citation>
    <scope>NUCLEOTIDE SEQUENCE [GENOMIC DNA]</scope>
</reference>
<accession>P13985</accession>
<protein>
    <recommendedName>
        <fullName>Putative HTLV-1-related endogenous sequence</fullName>
    </recommendedName>
    <alternativeName>
        <fullName>p25</fullName>
    </alternativeName>
</protein>
<evidence type="ECO:0000256" key="1">
    <source>
        <dbReference type="SAM" id="MobiDB-lite"/>
    </source>
</evidence>
<evidence type="ECO:0000305" key="2"/>
<name>HRES1_HUMAN</name>
<feature type="chain" id="PRO_0000317386" description="Putative HTLV-1-related endogenous sequence">
    <location>
        <begin position="1"/>
        <end position="223"/>
    </location>
</feature>
<feature type="region of interest" description="Disordered" evidence="1">
    <location>
        <begin position="1"/>
        <end position="184"/>
    </location>
</feature>
<feature type="compositionally biased region" description="Low complexity" evidence="1">
    <location>
        <begin position="1"/>
        <end position="19"/>
    </location>
</feature>
<feature type="compositionally biased region" description="Basic and acidic residues" evidence="1">
    <location>
        <begin position="115"/>
        <end position="126"/>
    </location>
</feature>
<feature type="compositionally biased region" description="Low complexity" evidence="1">
    <location>
        <begin position="133"/>
        <end position="157"/>
    </location>
</feature>
<sequence>MRCAHAPAPRTRYPTRAPSGPRPPSRSQAQTPPRSVPRLRPRHRHPQDPRSPGPAPRHRRPPRPDPRAPPARASYRRFRTWPSATSWERRRLSPGHRALARGPPARLGGEGPGAGDRRREGPDRSPRQPPVLPAAAAQPDSSSAQAPGPSTLRPAATARRKRRWATRGPAHPAFARAHGEAGAGRVRTSARAGSTCAGWALWRCALRWAERQVGALGAESRFP</sequence>
<keyword id="KW-1185">Reference proteome</keyword>
<organism>
    <name type="scientific">Homo sapiens</name>
    <name type="common">Human</name>
    <dbReference type="NCBI Taxonomy" id="9606"/>
    <lineage>
        <taxon>Eukaryota</taxon>
        <taxon>Metazoa</taxon>
        <taxon>Chordata</taxon>
        <taxon>Craniata</taxon>
        <taxon>Vertebrata</taxon>
        <taxon>Euteleostomi</taxon>
        <taxon>Mammalia</taxon>
        <taxon>Eutheria</taxon>
        <taxon>Euarchontoglires</taxon>
        <taxon>Primates</taxon>
        <taxon>Haplorrhini</taxon>
        <taxon>Catarrhini</taxon>
        <taxon>Hominidae</taxon>
        <taxon>Homo</taxon>
    </lineage>
</organism>
<comment type="caution">
    <text evidence="2">Product of a dubious gene prediction. Overlap the RAB4A locus.</text>
</comment>
<gene>
    <name type="primary">HRES1</name>
</gene>